<gene>
    <name evidence="1" type="primary">selD</name>
    <name type="ordered locus">Ent638_1683</name>
</gene>
<name>SELD_ENT38</name>
<reference key="1">
    <citation type="journal article" date="2010" name="PLoS Genet.">
        <title>Genome sequence of the plant growth promoting endophytic bacterium Enterobacter sp. 638.</title>
        <authorList>
            <person name="Taghavi S."/>
            <person name="van der Lelie D."/>
            <person name="Hoffman A."/>
            <person name="Zhang Y.B."/>
            <person name="Walla M.D."/>
            <person name="Vangronsveld J."/>
            <person name="Newman L."/>
            <person name="Monchy S."/>
        </authorList>
    </citation>
    <scope>NUCLEOTIDE SEQUENCE [LARGE SCALE GENOMIC DNA]</scope>
    <source>
        <strain>638</strain>
    </source>
</reference>
<feature type="chain" id="PRO_0000318671" description="Selenide, water dikinase">
    <location>
        <begin position="1"/>
        <end position="347"/>
    </location>
</feature>
<feature type="active site" evidence="1">
    <location>
        <position position="17"/>
    </location>
</feature>
<feature type="binding site" description="in other chain" evidence="1">
    <location>
        <position position="20"/>
    </location>
    <ligand>
        <name>ATP</name>
        <dbReference type="ChEBI" id="CHEBI:30616"/>
        <note>ligand shared between dimeric partners</note>
    </ligand>
</feature>
<feature type="binding site" description="in other chain" evidence="1">
    <location>
        <begin position="48"/>
        <end position="50"/>
    </location>
    <ligand>
        <name>ATP</name>
        <dbReference type="ChEBI" id="CHEBI:30616"/>
        <note>ligand shared between dimeric partners</note>
    </ligand>
</feature>
<feature type="binding site" evidence="1">
    <location>
        <position position="51"/>
    </location>
    <ligand>
        <name>Mg(2+)</name>
        <dbReference type="ChEBI" id="CHEBI:18420"/>
    </ligand>
</feature>
<feature type="binding site" description="in other chain" evidence="1">
    <location>
        <position position="68"/>
    </location>
    <ligand>
        <name>ATP</name>
        <dbReference type="ChEBI" id="CHEBI:30616"/>
        <note>ligand shared between dimeric partners</note>
    </ligand>
</feature>
<feature type="binding site" description="in other chain" evidence="1">
    <location>
        <position position="91"/>
    </location>
    <ligand>
        <name>ATP</name>
        <dbReference type="ChEBI" id="CHEBI:30616"/>
        <note>ligand shared between dimeric partners</note>
    </ligand>
</feature>
<feature type="binding site" evidence="1">
    <location>
        <position position="91"/>
    </location>
    <ligand>
        <name>Mg(2+)</name>
        <dbReference type="ChEBI" id="CHEBI:18420"/>
    </ligand>
</feature>
<feature type="binding site" evidence="1">
    <location>
        <begin position="139"/>
        <end position="141"/>
    </location>
    <ligand>
        <name>ATP</name>
        <dbReference type="ChEBI" id="CHEBI:30616"/>
        <note>ligand shared between dimeric partners</note>
    </ligand>
</feature>
<feature type="binding site" evidence="1">
    <location>
        <position position="227"/>
    </location>
    <ligand>
        <name>Mg(2+)</name>
        <dbReference type="ChEBI" id="CHEBI:18420"/>
    </ligand>
</feature>
<feature type="site" description="Important for catalytic activity" evidence="1">
    <location>
        <position position="20"/>
    </location>
</feature>
<protein>
    <recommendedName>
        <fullName evidence="1">Selenide, water dikinase</fullName>
        <ecNumber evidence="1">2.7.9.3</ecNumber>
    </recommendedName>
    <alternativeName>
        <fullName evidence="1">Selenium donor protein</fullName>
    </alternativeName>
    <alternativeName>
        <fullName evidence="1">Selenophosphate synthase</fullName>
    </alternativeName>
</protein>
<dbReference type="EC" id="2.7.9.3" evidence="1"/>
<dbReference type="EMBL" id="CP000653">
    <property type="protein sequence ID" value="ABP60362.1"/>
    <property type="molecule type" value="Genomic_DNA"/>
</dbReference>
<dbReference type="RefSeq" id="WP_012017078.1">
    <property type="nucleotide sequence ID" value="NC_009436.1"/>
</dbReference>
<dbReference type="SMR" id="A4W9I2"/>
<dbReference type="STRING" id="399742.Ent638_1683"/>
<dbReference type="KEGG" id="ent:Ent638_1683"/>
<dbReference type="eggNOG" id="COG0709">
    <property type="taxonomic scope" value="Bacteria"/>
</dbReference>
<dbReference type="HOGENOM" id="CLU_032859_0_1_6"/>
<dbReference type="OrthoDB" id="9767928at2"/>
<dbReference type="Proteomes" id="UP000000230">
    <property type="component" value="Chromosome"/>
</dbReference>
<dbReference type="GO" id="GO:0005737">
    <property type="term" value="C:cytoplasm"/>
    <property type="evidence" value="ECO:0007669"/>
    <property type="project" value="TreeGrafter"/>
</dbReference>
<dbReference type="GO" id="GO:0005524">
    <property type="term" value="F:ATP binding"/>
    <property type="evidence" value="ECO:0007669"/>
    <property type="project" value="UniProtKB-UniRule"/>
</dbReference>
<dbReference type="GO" id="GO:0000287">
    <property type="term" value="F:magnesium ion binding"/>
    <property type="evidence" value="ECO:0007669"/>
    <property type="project" value="UniProtKB-UniRule"/>
</dbReference>
<dbReference type="GO" id="GO:0004756">
    <property type="term" value="F:selenide, water dikinase activity"/>
    <property type="evidence" value="ECO:0007669"/>
    <property type="project" value="UniProtKB-UniRule"/>
</dbReference>
<dbReference type="GO" id="GO:0016260">
    <property type="term" value="P:selenocysteine biosynthetic process"/>
    <property type="evidence" value="ECO:0007669"/>
    <property type="project" value="InterPro"/>
</dbReference>
<dbReference type="CDD" id="cd02195">
    <property type="entry name" value="SelD"/>
    <property type="match status" value="1"/>
</dbReference>
<dbReference type="FunFam" id="3.30.1330.10:FF:000003">
    <property type="entry name" value="Selenide, water dikinase"/>
    <property type="match status" value="1"/>
</dbReference>
<dbReference type="FunFam" id="3.90.650.10:FF:000004">
    <property type="entry name" value="Selenide, water dikinase"/>
    <property type="match status" value="1"/>
</dbReference>
<dbReference type="Gene3D" id="3.90.650.10">
    <property type="entry name" value="PurM-like C-terminal domain"/>
    <property type="match status" value="1"/>
</dbReference>
<dbReference type="Gene3D" id="3.30.1330.10">
    <property type="entry name" value="PurM-like, N-terminal domain"/>
    <property type="match status" value="1"/>
</dbReference>
<dbReference type="HAMAP" id="MF_00625">
    <property type="entry name" value="SelD"/>
    <property type="match status" value="1"/>
</dbReference>
<dbReference type="InterPro" id="IPR010918">
    <property type="entry name" value="PurM-like_C_dom"/>
</dbReference>
<dbReference type="InterPro" id="IPR036676">
    <property type="entry name" value="PurM-like_C_sf"/>
</dbReference>
<dbReference type="InterPro" id="IPR016188">
    <property type="entry name" value="PurM-like_N"/>
</dbReference>
<dbReference type="InterPro" id="IPR036921">
    <property type="entry name" value="PurM-like_N_sf"/>
</dbReference>
<dbReference type="InterPro" id="IPR023061">
    <property type="entry name" value="SelD_I"/>
</dbReference>
<dbReference type="InterPro" id="IPR004536">
    <property type="entry name" value="SPS/SelD"/>
</dbReference>
<dbReference type="NCBIfam" id="NF002098">
    <property type="entry name" value="PRK00943.1"/>
    <property type="match status" value="1"/>
</dbReference>
<dbReference type="NCBIfam" id="TIGR00476">
    <property type="entry name" value="selD"/>
    <property type="match status" value="1"/>
</dbReference>
<dbReference type="PANTHER" id="PTHR10256:SF0">
    <property type="entry name" value="INACTIVE SELENIDE, WATER DIKINASE-LIKE PROTEIN-RELATED"/>
    <property type="match status" value="1"/>
</dbReference>
<dbReference type="PANTHER" id="PTHR10256">
    <property type="entry name" value="SELENIDE, WATER DIKINASE"/>
    <property type="match status" value="1"/>
</dbReference>
<dbReference type="Pfam" id="PF00586">
    <property type="entry name" value="AIRS"/>
    <property type="match status" value="1"/>
</dbReference>
<dbReference type="Pfam" id="PF02769">
    <property type="entry name" value="AIRS_C"/>
    <property type="match status" value="1"/>
</dbReference>
<dbReference type="PIRSF" id="PIRSF036407">
    <property type="entry name" value="Selenphspht_syn"/>
    <property type="match status" value="1"/>
</dbReference>
<dbReference type="SUPFAM" id="SSF56042">
    <property type="entry name" value="PurM C-terminal domain-like"/>
    <property type="match status" value="1"/>
</dbReference>
<dbReference type="SUPFAM" id="SSF55326">
    <property type="entry name" value="PurM N-terminal domain-like"/>
    <property type="match status" value="1"/>
</dbReference>
<evidence type="ECO:0000255" key="1">
    <source>
        <dbReference type="HAMAP-Rule" id="MF_00625"/>
    </source>
</evidence>
<sequence>MSEQTIRLTQYSHGAGCGCKISPKVLETILHSEQAKFVDPNLLVGNETRDDAAVYDLGNGTSVISTTDFFMPIVDNPFDFGRIAATNAISDIFAMGGKPIMAIAILGWPINTLAPEIAREVIEGGRFACQQAGIALAGGHSIDAPEPIFGLAVTGIVPTERVKRNSTAQPGCKLFLTKPLGIGVLTTAEKKSLLKPEHIGLATEVMCQMNLAGAAFANIDGVKAMTDVTGFGLLGHLSEVCQGAGVQAQIVYQEIPKLPGVEEYIAQGAVPGGTQRNFASYGHLMGEMPVEWRDLLCDPQTSGGLLLAVTPESETEVKATAAEFGITLTAIGELVTARGGRPMIEIR</sequence>
<proteinExistence type="inferred from homology"/>
<accession>A4W9I2</accession>
<organism>
    <name type="scientific">Enterobacter sp. (strain 638)</name>
    <dbReference type="NCBI Taxonomy" id="399742"/>
    <lineage>
        <taxon>Bacteria</taxon>
        <taxon>Pseudomonadati</taxon>
        <taxon>Pseudomonadota</taxon>
        <taxon>Gammaproteobacteria</taxon>
        <taxon>Enterobacterales</taxon>
        <taxon>Enterobacteriaceae</taxon>
        <taxon>Enterobacter</taxon>
    </lineage>
</organism>
<keyword id="KW-0067">ATP-binding</keyword>
<keyword id="KW-0418">Kinase</keyword>
<keyword id="KW-0460">Magnesium</keyword>
<keyword id="KW-0479">Metal-binding</keyword>
<keyword id="KW-0547">Nucleotide-binding</keyword>
<keyword id="KW-0711">Selenium</keyword>
<keyword id="KW-0808">Transferase</keyword>
<comment type="function">
    <text evidence="1">Synthesizes selenophosphate from selenide and ATP.</text>
</comment>
<comment type="catalytic activity">
    <reaction evidence="1">
        <text>hydrogenselenide + ATP + H2O = selenophosphate + AMP + phosphate + 2 H(+)</text>
        <dbReference type="Rhea" id="RHEA:18737"/>
        <dbReference type="ChEBI" id="CHEBI:15377"/>
        <dbReference type="ChEBI" id="CHEBI:15378"/>
        <dbReference type="ChEBI" id="CHEBI:16144"/>
        <dbReference type="ChEBI" id="CHEBI:29317"/>
        <dbReference type="ChEBI" id="CHEBI:30616"/>
        <dbReference type="ChEBI" id="CHEBI:43474"/>
        <dbReference type="ChEBI" id="CHEBI:456215"/>
        <dbReference type="EC" id="2.7.9.3"/>
    </reaction>
</comment>
<comment type="cofactor">
    <cofactor evidence="1">
        <name>Mg(2+)</name>
        <dbReference type="ChEBI" id="CHEBI:18420"/>
    </cofactor>
    <text evidence="1">Binds 1 Mg(2+) ion per monomer.</text>
</comment>
<comment type="subunit">
    <text evidence="1">Homodimer.</text>
</comment>
<comment type="similarity">
    <text evidence="1">Belongs to the selenophosphate synthase 1 family. Class I subfamily.</text>
</comment>